<name>SURE_CLOBB</name>
<sequence>MNILITNDDGISARGIKTLAEKMSKKHNIIVVAPREQKSASSHSISINIPIKIREEKIEGLDCKAYSLVGTPADCTQAGISLLAKGIDLVISGINRGFNSGTDILYSGTVSAAIEGALYDVPSIAISMDVKWDRDDEDYSKAANWVSKVVDLAEKKYLKKNVVLNINVPNINEEDIKGLKVCKIGKSTYKTEYVLLEEDNDKVYQTSGVRNQVEKDESDLYFLSQGYVTLTPLHFDFTNFKELNEVKKIFE</sequence>
<proteinExistence type="inferred from homology"/>
<accession>B2TPM3</accession>
<gene>
    <name evidence="1" type="primary">surE</name>
    <name type="ordered locus">CLL_A2994</name>
</gene>
<feature type="chain" id="PRO_1000091992" description="5'-nucleotidase SurE">
    <location>
        <begin position="1"/>
        <end position="251"/>
    </location>
</feature>
<feature type="binding site" evidence="1">
    <location>
        <position position="8"/>
    </location>
    <ligand>
        <name>a divalent metal cation</name>
        <dbReference type="ChEBI" id="CHEBI:60240"/>
    </ligand>
</feature>
<feature type="binding site" evidence="1">
    <location>
        <position position="9"/>
    </location>
    <ligand>
        <name>a divalent metal cation</name>
        <dbReference type="ChEBI" id="CHEBI:60240"/>
    </ligand>
</feature>
<feature type="binding site" evidence="1">
    <location>
        <position position="39"/>
    </location>
    <ligand>
        <name>a divalent metal cation</name>
        <dbReference type="ChEBI" id="CHEBI:60240"/>
    </ligand>
</feature>
<feature type="binding site" evidence="1">
    <location>
        <position position="95"/>
    </location>
    <ligand>
        <name>a divalent metal cation</name>
        <dbReference type="ChEBI" id="CHEBI:60240"/>
    </ligand>
</feature>
<protein>
    <recommendedName>
        <fullName evidence="1">5'-nucleotidase SurE</fullName>
        <ecNumber evidence="1">3.1.3.5</ecNumber>
    </recommendedName>
    <alternativeName>
        <fullName evidence="1">Nucleoside 5'-monophosphate phosphohydrolase</fullName>
    </alternativeName>
</protein>
<dbReference type="EC" id="3.1.3.5" evidence="1"/>
<dbReference type="EMBL" id="CP001056">
    <property type="protein sequence ID" value="ACD23542.1"/>
    <property type="molecule type" value="Genomic_DNA"/>
</dbReference>
<dbReference type="SMR" id="B2TPM3"/>
<dbReference type="KEGG" id="cbk:CLL_A2994"/>
<dbReference type="PATRIC" id="fig|935198.13.peg.2957"/>
<dbReference type="HOGENOM" id="CLU_045192_1_3_9"/>
<dbReference type="Proteomes" id="UP000001195">
    <property type="component" value="Chromosome"/>
</dbReference>
<dbReference type="GO" id="GO:0005737">
    <property type="term" value="C:cytoplasm"/>
    <property type="evidence" value="ECO:0007669"/>
    <property type="project" value="UniProtKB-SubCell"/>
</dbReference>
<dbReference type="GO" id="GO:0008254">
    <property type="term" value="F:3'-nucleotidase activity"/>
    <property type="evidence" value="ECO:0007669"/>
    <property type="project" value="TreeGrafter"/>
</dbReference>
<dbReference type="GO" id="GO:0008253">
    <property type="term" value="F:5'-nucleotidase activity"/>
    <property type="evidence" value="ECO:0007669"/>
    <property type="project" value="UniProtKB-UniRule"/>
</dbReference>
<dbReference type="GO" id="GO:0004309">
    <property type="term" value="F:exopolyphosphatase activity"/>
    <property type="evidence" value="ECO:0007669"/>
    <property type="project" value="TreeGrafter"/>
</dbReference>
<dbReference type="GO" id="GO:0046872">
    <property type="term" value="F:metal ion binding"/>
    <property type="evidence" value="ECO:0007669"/>
    <property type="project" value="UniProtKB-UniRule"/>
</dbReference>
<dbReference type="GO" id="GO:0000166">
    <property type="term" value="F:nucleotide binding"/>
    <property type="evidence" value="ECO:0007669"/>
    <property type="project" value="UniProtKB-KW"/>
</dbReference>
<dbReference type="Gene3D" id="3.40.1210.10">
    <property type="entry name" value="Survival protein SurE-like phosphatase/nucleotidase"/>
    <property type="match status" value="1"/>
</dbReference>
<dbReference type="HAMAP" id="MF_00060">
    <property type="entry name" value="SurE"/>
    <property type="match status" value="1"/>
</dbReference>
<dbReference type="InterPro" id="IPR030048">
    <property type="entry name" value="SurE"/>
</dbReference>
<dbReference type="InterPro" id="IPR002828">
    <property type="entry name" value="SurE-like_Pase/nucleotidase"/>
</dbReference>
<dbReference type="InterPro" id="IPR036523">
    <property type="entry name" value="SurE-like_sf"/>
</dbReference>
<dbReference type="NCBIfam" id="NF010543">
    <property type="entry name" value="PRK13933.1"/>
    <property type="match status" value="1"/>
</dbReference>
<dbReference type="NCBIfam" id="TIGR00087">
    <property type="entry name" value="surE"/>
    <property type="match status" value="1"/>
</dbReference>
<dbReference type="PANTHER" id="PTHR30457">
    <property type="entry name" value="5'-NUCLEOTIDASE SURE"/>
    <property type="match status" value="1"/>
</dbReference>
<dbReference type="PANTHER" id="PTHR30457:SF12">
    <property type="entry name" value="5'_3'-NUCLEOTIDASE SURE"/>
    <property type="match status" value="1"/>
</dbReference>
<dbReference type="Pfam" id="PF01975">
    <property type="entry name" value="SurE"/>
    <property type="match status" value="1"/>
</dbReference>
<dbReference type="SUPFAM" id="SSF64167">
    <property type="entry name" value="SurE-like"/>
    <property type="match status" value="1"/>
</dbReference>
<keyword id="KW-0963">Cytoplasm</keyword>
<keyword id="KW-0378">Hydrolase</keyword>
<keyword id="KW-0479">Metal-binding</keyword>
<keyword id="KW-0547">Nucleotide-binding</keyword>
<comment type="function">
    <text evidence="1">Nucleotidase that shows phosphatase activity on nucleoside 5'-monophosphates.</text>
</comment>
<comment type="catalytic activity">
    <reaction evidence="1">
        <text>a ribonucleoside 5'-phosphate + H2O = a ribonucleoside + phosphate</text>
        <dbReference type="Rhea" id="RHEA:12484"/>
        <dbReference type="ChEBI" id="CHEBI:15377"/>
        <dbReference type="ChEBI" id="CHEBI:18254"/>
        <dbReference type="ChEBI" id="CHEBI:43474"/>
        <dbReference type="ChEBI" id="CHEBI:58043"/>
        <dbReference type="EC" id="3.1.3.5"/>
    </reaction>
</comment>
<comment type="cofactor">
    <cofactor evidence="1">
        <name>a divalent metal cation</name>
        <dbReference type="ChEBI" id="CHEBI:60240"/>
    </cofactor>
    <text evidence="1">Binds 1 divalent metal cation per subunit.</text>
</comment>
<comment type="subcellular location">
    <subcellularLocation>
        <location evidence="1">Cytoplasm</location>
    </subcellularLocation>
</comment>
<comment type="similarity">
    <text evidence="1">Belongs to the SurE nucleotidase family.</text>
</comment>
<evidence type="ECO:0000255" key="1">
    <source>
        <dbReference type="HAMAP-Rule" id="MF_00060"/>
    </source>
</evidence>
<organism>
    <name type="scientific">Clostridium botulinum (strain Eklund 17B / Type B)</name>
    <dbReference type="NCBI Taxonomy" id="935198"/>
    <lineage>
        <taxon>Bacteria</taxon>
        <taxon>Bacillati</taxon>
        <taxon>Bacillota</taxon>
        <taxon>Clostridia</taxon>
        <taxon>Eubacteriales</taxon>
        <taxon>Clostridiaceae</taxon>
        <taxon>Clostridium</taxon>
    </lineage>
</organism>
<reference key="1">
    <citation type="submission" date="2008-04" db="EMBL/GenBank/DDBJ databases">
        <title>Complete sequence of Clostridium botulinum strain Eklund.</title>
        <authorList>
            <person name="Brinkac L.M."/>
            <person name="Brown J.L."/>
            <person name="Bruce D."/>
            <person name="Detter C."/>
            <person name="Munk C."/>
            <person name="Smith L.A."/>
            <person name="Smith T.J."/>
            <person name="Sutton G."/>
            <person name="Brettin T.S."/>
        </authorList>
    </citation>
    <scope>NUCLEOTIDE SEQUENCE [LARGE SCALE GENOMIC DNA]</scope>
    <source>
        <strain>Eklund 17B / Type B</strain>
    </source>
</reference>